<accession>B1I710</accession>
<feature type="chain" id="PRO_1000127581" description="D-aminoacyl-tRNA deacylase">
    <location>
        <begin position="1"/>
        <end position="147"/>
    </location>
</feature>
<feature type="short sequence motif" description="Gly-cisPro motif, important for rejection of L-amino acids" evidence="1">
    <location>
        <begin position="136"/>
        <end position="137"/>
    </location>
</feature>
<sequence>MKIIIQRVKKAQVSIEGQIQGKINQGLLLLVGVGPEDQEEDLDYAVRKLVNMRIFSDAEGKMNLSVKDIEGEILSISQFTLFADTKKGNRPAFTGAAKPDMASDFYDAFNQKLAQEVPVQTGIFGADMQVELVNNGPVTIILDTKKR</sequence>
<name>DTD_STRPI</name>
<proteinExistence type="inferred from homology"/>
<evidence type="ECO:0000255" key="1">
    <source>
        <dbReference type="HAMAP-Rule" id="MF_00518"/>
    </source>
</evidence>
<dbReference type="EC" id="3.1.1.96" evidence="1"/>
<dbReference type="EMBL" id="CP000936">
    <property type="protein sequence ID" value="ACA35763.1"/>
    <property type="molecule type" value="Genomic_DNA"/>
</dbReference>
<dbReference type="RefSeq" id="WP_000691400.1">
    <property type="nucleotide sequence ID" value="NC_010380.1"/>
</dbReference>
<dbReference type="SMR" id="B1I710"/>
<dbReference type="GeneID" id="45653142"/>
<dbReference type="KEGG" id="spv:SPH_1752"/>
<dbReference type="HOGENOM" id="CLU_076901_1_0_9"/>
<dbReference type="Proteomes" id="UP000002163">
    <property type="component" value="Chromosome"/>
</dbReference>
<dbReference type="GO" id="GO:0005737">
    <property type="term" value="C:cytoplasm"/>
    <property type="evidence" value="ECO:0007669"/>
    <property type="project" value="UniProtKB-SubCell"/>
</dbReference>
<dbReference type="GO" id="GO:0051500">
    <property type="term" value="F:D-tyrosyl-tRNA(Tyr) deacylase activity"/>
    <property type="evidence" value="ECO:0007669"/>
    <property type="project" value="TreeGrafter"/>
</dbReference>
<dbReference type="GO" id="GO:0106026">
    <property type="term" value="F:Gly-tRNA(Ala) deacylase activity"/>
    <property type="evidence" value="ECO:0007669"/>
    <property type="project" value="UniProtKB-UniRule"/>
</dbReference>
<dbReference type="GO" id="GO:0043908">
    <property type="term" value="F:Ser(Gly)-tRNA(Ala) hydrolase activity"/>
    <property type="evidence" value="ECO:0007669"/>
    <property type="project" value="UniProtKB-UniRule"/>
</dbReference>
<dbReference type="GO" id="GO:0000049">
    <property type="term" value="F:tRNA binding"/>
    <property type="evidence" value="ECO:0007669"/>
    <property type="project" value="UniProtKB-UniRule"/>
</dbReference>
<dbReference type="GO" id="GO:0019478">
    <property type="term" value="P:D-amino acid catabolic process"/>
    <property type="evidence" value="ECO:0007669"/>
    <property type="project" value="UniProtKB-UniRule"/>
</dbReference>
<dbReference type="CDD" id="cd00563">
    <property type="entry name" value="Dtyr_deacylase"/>
    <property type="match status" value="1"/>
</dbReference>
<dbReference type="FunFam" id="3.50.80.10:FF:000001">
    <property type="entry name" value="D-aminoacyl-tRNA deacylase"/>
    <property type="match status" value="1"/>
</dbReference>
<dbReference type="Gene3D" id="3.50.80.10">
    <property type="entry name" value="D-tyrosyl-tRNA(Tyr) deacylase"/>
    <property type="match status" value="1"/>
</dbReference>
<dbReference type="HAMAP" id="MF_00518">
    <property type="entry name" value="Deacylase_Dtd"/>
    <property type="match status" value="1"/>
</dbReference>
<dbReference type="InterPro" id="IPR003732">
    <property type="entry name" value="Daa-tRNA_deacyls_DTD"/>
</dbReference>
<dbReference type="InterPro" id="IPR023509">
    <property type="entry name" value="DTD-like_sf"/>
</dbReference>
<dbReference type="NCBIfam" id="TIGR00256">
    <property type="entry name" value="D-aminoacyl-tRNA deacylase"/>
    <property type="match status" value="1"/>
</dbReference>
<dbReference type="PANTHER" id="PTHR10472:SF5">
    <property type="entry name" value="D-AMINOACYL-TRNA DEACYLASE 1"/>
    <property type="match status" value="1"/>
</dbReference>
<dbReference type="PANTHER" id="PTHR10472">
    <property type="entry name" value="D-TYROSYL-TRNA TYR DEACYLASE"/>
    <property type="match status" value="1"/>
</dbReference>
<dbReference type="Pfam" id="PF02580">
    <property type="entry name" value="Tyr_Deacylase"/>
    <property type="match status" value="1"/>
</dbReference>
<dbReference type="SUPFAM" id="SSF69500">
    <property type="entry name" value="DTD-like"/>
    <property type="match status" value="1"/>
</dbReference>
<keyword id="KW-0963">Cytoplasm</keyword>
<keyword id="KW-0378">Hydrolase</keyword>
<keyword id="KW-0694">RNA-binding</keyword>
<keyword id="KW-0820">tRNA-binding</keyword>
<gene>
    <name evidence="1" type="primary">dtd</name>
    <name type="ordered locus">SPH_1752</name>
</gene>
<comment type="function">
    <text evidence="1">An aminoacyl-tRNA editing enzyme that deacylates mischarged D-aminoacyl-tRNAs. Also deacylates mischarged glycyl-tRNA(Ala), protecting cells against glycine mischarging by AlaRS. Acts via tRNA-based rather than protein-based catalysis; rejects L-amino acids rather than detecting D-amino acids in the active site. By recycling D-aminoacyl-tRNA to D-amino acids and free tRNA molecules, this enzyme counteracts the toxicity associated with the formation of D-aminoacyl-tRNA entities in vivo and helps enforce protein L-homochirality.</text>
</comment>
<comment type="catalytic activity">
    <reaction evidence="1">
        <text>glycyl-tRNA(Ala) + H2O = tRNA(Ala) + glycine + H(+)</text>
        <dbReference type="Rhea" id="RHEA:53744"/>
        <dbReference type="Rhea" id="RHEA-COMP:9657"/>
        <dbReference type="Rhea" id="RHEA-COMP:13640"/>
        <dbReference type="ChEBI" id="CHEBI:15377"/>
        <dbReference type="ChEBI" id="CHEBI:15378"/>
        <dbReference type="ChEBI" id="CHEBI:57305"/>
        <dbReference type="ChEBI" id="CHEBI:78442"/>
        <dbReference type="ChEBI" id="CHEBI:78522"/>
        <dbReference type="EC" id="3.1.1.96"/>
    </reaction>
</comment>
<comment type="catalytic activity">
    <reaction evidence="1">
        <text>a D-aminoacyl-tRNA + H2O = a tRNA + a D-alpha-amino acid + H(+)</text>
        <dbReference type="Rhea" id="RHEA:13953"/>
        <dbReference type="Rhea" id="RHEA-COMP:10123"/>
        <dbReference type="Rhea" id="RHEA-COMP:10124"/>
        <dbReference type="ChEBI" id="CHEBI:15377"/>
        <dbReference type="ChEBI" id="CHEBI:15378"/>
        <dbReference type="ChEBI" id="CHEBI:59871"/>
        <dbReference type="ChEBI" id="CHEBI:78442"/>
        <dbReference type="ChEBI" id="CHEBI:79333"/>
        <dbReference type="EC" id="3.1.1.96"/>
    </reaction>
</comment>
<comment type="subunit">
    <text evidence="1">Homodimer.</text>
</comment>
<comment type="subcellular location">
    <subcellularLocation>
        <location evidence="1">Cytoplasm</location>
    </subcellularLocation>
</comment>
<comment type="domain">
    <text evidence="1">A Gly-cisPro motif from one monomer fits into the active site of the other monomer to allow specific chiral rejection of L-amino acids.</text>
</comment>
<comment type="similarity">
    <text evidence="1">Belongs to the DTD family.</text>
</comment>
<reference key="1">
    <citation type="journal article" date="2010" name="Genome Biol.">
        <title>Structure and dynamics of the pan-genome of Streptococcus pneumoniae and closely related species.</title>
        <authorList>
            <person name="Donati C."/>
            <person name="Hiller N.L."/>
            <person name="Tettelin H."/>
            <person name="Muzzi A."/>
            <person name="Croucher N.J."/>
            <person name="Angiuoli S.V."/>
            <person name="Oggioni M."/>
            <person name="Dunning Hotopp J.C."/>
            <person name="Hu F.Z."/>
            <person name="Riley D.R."/>
            <person name="Covacci A."/>
            <person name="Mitchell T.J."/>
            <person name="Bentley S.D."/>
            <person name="Kilian M."/>
            <person name="Ehrlich G.D."/>
            <person name="Rappuoli R."/>
            <person name="Moxon E.R."/>
            <person name="Masignani V."/>
        </authorList>
    </citation>
    <scope>NUCLEOTIDE SEQUENCE [LARGE SCALE GENOMIC DNA]</scope>
    <source>
        <strain>Hungary19A-6</strain>
    </source>
</reference>
<organism>
    <name type="scientific">Streptococcus pneumoniae (strain Hungary19A-6)</name>
    <dbReference type="NCBI Taxonomy" id="487214"/>
    <lineage>
        <taxon>Bacteria</taxon>
        <taxon>Bacillati</taxon>
        <taxon>Bacillota</taxon>
        <taxon>Bacilli</taxon>
        <taxon>Lactobacillales</taxon>
        <taxon>Streptococcaceae</taxon>
        <taxon>Streptococcus</taxon>
    </lineage>
</organism>
<protein>
    <recommendedName>
        <fullName evidence="1">D-aminoacyl-tRNA deacylase</fullName>
        <shortName evidence="1">DTD</shortName>
        <ecNumber evidence="1">3.1.1.96</ecNumber>
    </recommendedName>
    <alternativeName>
        <fullName evidence="1">Gly-tRNA(Ala) deacylase</fullName>
    </alternativeName>
</protein>